<comment type="function">
    <text evidence="9 10 11 12 14 17 18 21 22 23">Calcium-independent, phospholipid- and diacylglycerol (DAG)-dependent serine/threonine-protein kinase that is involved in the regulation of cell differentiation in keratinocytes and pre-B cell receptor, mediates regulation of epithelial tight junction integrity and foam cell formation, and is required for glioblastoma proliferation and apoptosis prevention in MCF-7 cells. In keratinocytes, binds and activates the tyrosine kinase FYN, which in turn blocks epidermal growth factor receptor (EGFR) signaling and leads to keratinocyte growth arrest and differentiation. Associates with the cyclin CCNE1-CDK2-CDKN1B complex and inhibits CDK2 kinase activity, leading to RB1 dephosphorylation and thereby G1 arrest in keratinocytes. In association with RALA activates actin depolymerization, which is necessary for keratinocyte differentiation. In the pre-B cell receptor signaling, functions downstream of BLNK by up-regulating IRF4, which in turn activates L chain gene rearrangement. Regulates epithelial tight junctions (TJs) by phosphorylating occludin (OCLN) on threonine residues, which is necessary for the assembly and maintenance of TJs. In association with PLD2 and via TLR4 signaling, is involved in lipopolysaccharide (LPS)-induced RGS2 down-regulation and foam cell formation. Upon PMA stimulation, mediates glioblastoma cell proliferation by activating the mTOR pathway, the PI3K/AKT pathway and the ERK1-dependent phosphorylation of ELK1. Involved in the protection of glioblastoma cells from irradiation-induced apoptosis by preventing caspase-9 activation. In camptothecin-treated MCF-7 cells, regulates NF-kappa-B upstream signaling by activating IKBKB, and confers protection against DNA damage-induced apoptosis. Promotes oncogenic functions of ATF2 in the nucleus while blocking its apoptotic function at mitochondria. Phosphorylates ATF2 which promotes its nuclear retention and transcriptional activity and negatively regulates its mitochondrial localization.</text>
</comment>
<comment type="catalytic activity">
    <reaction evidence="24">
        <text>L-seryl-[protein] + ATP = O-phospho-L-seryl-[protein] + ADP + H(+)</text>
        <dbReference type="Rhea" id="RHEA:17989"/>
        <dbReference type="Rhea" id="RHEA-COMP:9863"/>
        <dbReference type="Rhea" id="RHEA-COMP:11604"/>
        <dbReference type="ChEBI" id="CHEBI:15378"/>
        <dbReference type="ChEBI" id="CHEBI:29999"/>
        <dbReference type="ChEBI" id="CHEBI:30616"/>
        <dbReference type="ChEBI" id="CHEBI:83421"/>
        <dbReference type="ChEBI" id="CHEBI:456216"/>
        <dbReference type="EC" id="2.7.11.13"/>
    </reaction>
</comment>
<comment type="catalytic activity">
    <reaction evidence="24">
        <text>L-threonyl-[protein] + ATP = O-phospho-L-threonyl-[protein] + ADP + H(+)</text>
        <dbReference type="Rhea" id="RHEA:46608"/>
        <dbReference type="Rhea" id="RHEA-COMP:11060"/>
        <dbReference type="Rhea" id="RHEA-COMP:11605"/>
        <dbReference type="ChEBI" id="CHEBI:15378"/>
        <dbReference type="ChEBI" id="CHEBI:30013"/>
        <dbReference type="ChEBI" id="CHEBI:30616"/>
        <dbReference type="ChEBI" id="CHEBI:61977"/>
        <dbReference type="ChEBI" id="CHEBI:456216"/>
        <dbReference type="EC" id="2.7.11.13"/>
    </reaction>
</comment>
<comment type="activity regulation">
    <text evidence="24">Novel PKCs (PRKCD, PRKCE, PRKCH and PRKCQ) are calcium-insensitive, but activated by diacylglycerol (DAG) and phosphatidylserine. Three specific sites; Thr-513 (activation loop of the kinase domain), Thr-656 (turn motif) and Ser-675 (hydrophobic region), need to be phosphorylated for its full activation. Inhibited by PRKCH upstream open reading frame 2 (PubMed:34593629).</text>
</comment>
<comment type="subunit">
    <text evidence="2 13 24">Interacts with FYN (By similarity). Interacts with RALA (By similarity). Interacts with DGKQ (PubMed:15632189). Interacts with PRKCH upstream open reading frame 2; the interaction leads to inhibition of kinase activity (PubMed:34593629).</text>
</comment>
<comment type="interaction">
    <interactant intactId="EBI-2865850">
        <id>P24723</id>
    </interactant>
    <interactant intactId="EBI-16115673">
        <id>Q16625-1</id>
        <label>OCLN</label>
    </interactant>
    <organismsDiffer>false</organismsDiffer>
    <experiments>2</experiments>
</comment>
<comment type="interaction">
    <interactant intactId="EBI-2865850">
        <id>P24723</id>
    </interactant>
    <interactant intactId="EBI-16222162">
        <id>Q28269</id>
        <label>OCLN</label>
    </interactant>
    <organismsDiffer>true</organismsDiffer>
    <experiments>2</experiments>
</comment>
<comment type="subcellular location">
    <subcellularLocation>
        <location evidence="1">Cytoplasm</location>
    </subcellularLocation>
</comment>
<comment type="alternative products">
    <event type="alternative splicing"/>
    <isoform>
        <id>P24723-1</id>
        <name>1</name>
        <sequence type="displayed"/>
    </isoform>
    <isoform>
        <id>P24723-2</id>
        <name>2</name>
        <sequence type="described" ref="VSP_056572"/>
    </isoform>
</comment>
<comment type="tissue specificity">
    <text evidence="20">Most abundant in lung, less in heart and skin.</text>
</comment>
<comment type="induction">
    <text evidence="19">By stress conditions caused by amino acid starvation (at protein level).</text>
</comment>
<comment type="domain">
    <text>The C1 domain, containing the phorbol ester/DAG-type region 1 (C1A) and 2 (C1B), is the diacylglycerol sensor and the C2 domain is a non-calcium binding domain.</text>
</comment>
<comment type="disease" evidence="15">
    <disease id="DI-01835">
        <name>Ischemic stroke</name>
        <acronym>ISCHSTR</acronym>
        <description>A stroke is an acute neurologic event leading to death of neural tissue of the brain and resulting in loss of motor, sensory and/or cognitive function. Ischemic strokes, resulting from vascular occlusion, is considered to be a highly complex disease consisting of a group of heterogeneous disorders with multiple genetic and environmental risk factors.</description>
        <dbReference type="MIM" id="601367"/>
    </disease>
    <text>Disease susceptibility is associated with variants affecting the gene represented in this entry.</text>
</comment>
<comment type="similarity">
    <text evidence="26">Belongs to the protein kinase superfamily. AGC Ser/Thr protein kinase family. PKC subfamily.</text>
</comment>
<feature type="chain" id="PRO_0000055705" description="Protein kinase C eta type">
    <location>
        <begin position="1"/>
        <end position="683"/>
    </location>
</feature>
<feature type="domain" description="C2" evidence="3">
    <location>
        <begin position="1"/>
        <end position="118"/>
    </location>
</feature>
<feature type="domain" description="Protein kinase" evidence="4">
    <location>
        <begin position="355"/>
        <end position="614"/>
    </location>
</feature>
<feature type="domain" description="AGC-kinase C-terminal" evidence="6">
    <location>
        <begin position="615"/>
        <end position="683"/>
    </location>
</feature>
<feature type="zinc finger region" description="Phorbol-ester/DAG-type 1" evidence="5">
    <location>
        <begin position="171"/>
        <end position="222"/>
    </location>
</feature>
<feature type="zinc finger region" description="Phorbol-ester/DAG-type 2" evidence="5">
    <location>
        <begin position="245"/>
        <end position="295"/>
    </location>
</feature>
<feature type="region of interest" description="Disordered" evidence="8">
    <location>
        <begin position="320"/>
        <end position="342"/>
    </location>
</feature>
<feature type="active site" description="Proton acceptor" evidence="4 7">
    <location>
        <position position="479"/>
    </location>
</feature>
<feature type="binding site" evidence="4">
    <location>
        <begin position="361"/>
        <end position="369"/>
    </location>
    <ligand>
        <name>ATP</name>
        <dbReference type="ChEBI" id="CHEBI:30616"/>
    </ligand>
</feature>
<feature type="binding site" evidence="4">
    <location>
        <position position="384"/>
    </location>
    <ligand>
        <name>ATP</name>
        <dbReference type="ChEBI" id="CHEBI:30616"/>
    </ligand>
</feature>
<feature type="modified residue" description="Phosphoserine; by autocatalysis" evidence="27 28">
    <location>
        <position position="28"/>
    </location>
</feature>
<feature type="modified residue" description="Phosphoserine; by autocatalysis" evidence="27">
    <location>
        <position position="32"/>
    </location>
</feature>
<feature type="modified residue" description="Phosphoserine" evidence="2">
    <location>
        <position position="317"/>
    </location>
</feature>
<feature type="modified residue" description="Phosphothreonine; by PDPK1" evidence="26">
    <location>
        <position position="513"/>
    </location>
</feature>
<feature type="modified residue" description="Phosphothreonine" evidence="24 29">
    <location>
        <position position="656"/>
    </location>
</feature>
<feature type="modified residue" description="Phosphoserine" evidence="24">
    <location>
        <position position="675"/>
    </location>
</feature>
<feature type="splice variant" id="VSP_056572" description="In isoform 2." evidence="25">
    <location>
        <begin position="1"/>
        <end position="161"/>
    </location>
</feature>
<feature type="sequence variant" id="VAR_042312" description="In dbSNP:rs55645551." evidence="16">
    <original>A</original>
    <variation>V</variation>
    <location>
        <position position="19"/>
    </location>
</feature>
<feature type="sequence variant" id="VAR_042313" description="In dbSNP:rs55737090." evidence="16">
    <original>K</original>
    <variation>R</variation>
    <location>
        <position position="65"/>
    </location>
</feature>
<feature type="sequence variant" id="VAR_042314" description="In dbSNP:rs55848048." evidence="16">
    <original>R</original>
    <variation>Q</variation>
    <location>
        <position position="149"/>
    </location>
</feature>
<feature type="sequence variant" id="VAR_042315" description="In dbSNP:rs55818778." evidence="16">
    <original>R</original>
    <variation>Q</variation>
    <location>
        <position position="359"/>
    </location>
</feature>
<feature type="sequence variant" id="VAR_034604" description="Risk factor for ischemic stroke; increases autophosphorylation and kinase activity; dbSNP:rs2230500." evidence="15 16">
    <original>V</original>
    <variation>I</variation>
    <location>
        <position position="374"/>
    </location>
</feature>
<feature type="sequence variant" id="VAR_060736" description="In dbSNP:rs11846991.">
    <original>D</original>
    <variation>Y</variation>
    <location>
        <position position="497"/>
    </location>
</feature>
<feature type="sequence variant" id="VAR_042316" description="In a aLL TEL/AML1+ sample; somatic mutation; dbSNP:rs1378993559." evidence="16">
    <original>T</original>
    <variation>A</variation>
    <location>
        <position position="575"/>
    </location>
</feature>
<feature type="sequence variant" id="VAR_042317" description="In a colorectal adenocarcinoma sample; somatic mutation." evidence="16">
    <original>T</original>
    <variation>I</variation>
    <location>
        <position position="594"/>
    </location>
</feature>
<feature type="sequence variant" id="VAR_042318" description="In dbSNP:rs34159231." evidence="16">
    <original>P</original>
    <variation>S</variation>
    <location>
        <position position="612"/>
    </location>
</feature>
<feature type="sequence variant" id="VAR_042438" description="In dbSNP:rs35561533.">
    <original>D</original>
    <variation>V</variation>
    <location>
        <position position="645"/>
    </location>
</feature>
<feature type="sequence conflict" description="In Ref. 1; AAA60100." evidence="26" ref="1">
    <location>
        <position position="96"/>
    </location>
</feature>
<feature type="sequence conflict" description="In Ref. 1; AAA60100." evidence="26" ref="1">
    <original>L</original>
    <variation>R</variation>
    <location>
        <position position="109"/>
    </location>
</feature>
<feature type="sequence conflict" description="In Ref. 1; AAA60100." evidence="26" ref="1">
    <original>R</original>
    <variation>G</variation>
    <location>
        <position position="110"/>
    </location>
</feature>
<feature type="sequence conflict" description="In Ref. 1; AAA60100." evidence="26" ref="1">
    <original>Q</original>
    <variation>L</variation>
    <location>
        <position position="393"/>
    </location>
</feature>
<feature type="sequence conflict" description="In Ref. 7; AAB32724." evidence="26" ref="7">
    <original>D</original>
    <variation>E</variation>
    <location>
        <position position="472"/>
    </location>
</feature>
<feature type="strand" evidence="30">
    <location>
        <begin position="8"/>
        <end position="20"/>
    </location>
</feature>
<feature type="helix" evidence="30">
    <location>
        <begin position="26"/>
        <end position="30"/>
    </location>
</feature>
<feature type="turn" evidence="30">
    <location>
        <begin position="31"/>
        <end position="33"/>
    </location>
</feature>
<feature type="strand" evidence="30">
    <location>
        <begin position="34"/>
        <end position="37"/>
    </location>
</feature>
<feature type="strand" evidence="30">
    <location>
        <begin position="43"/>
        <end position="49"/>
    </location>
</feature>
<feature type="strand" evidence="30">
    <location>
        <begin position="52"/>
        <end position="56"/>
    </location>
</feature>
<feature type="strand" evidence="30">
    <location>
        <begin position="67"/>
        <end position="79"/>
    </location>
</feature>
<feature type="strand" evidence="30">
    <location>
        <begin position="81"/>
        <end position="88"/>
    </location>
</feature>
<feature type="strand" evidence="30">
    <location>
        <begin position="91"/>
        <end position="94"/>
    </location>
</feature>
<feature type="strand" evidence="30">
    <location>
        <begin position="96"/>
        <end position="104"/>
    </location>
</feature>
<feature type="helix" evidence="30">
    <location>
        <begin position="105"/>
        <end position="112"/>
    </location>
</feature>
<feature type="strand" evidence="30">
    <location>
        <begin position="116"/>
        <end position="123"/>
    </location>
</feature>
<feature type="strand" evidence="30">
    <location>
        <begin position="125"/>
        <end position="127"/>
    </location>
</feature>
<feature type="strand" evidence="30">
    <location>
        <begin position="129"/>
        <end position="137"/>
    </location>
</feature>
<feature type="helix" evidence="31">
    <location>
        <begin position="352"/>
        <end position="354"/>
    </location>
</feature>
<feature type="strand" evidence="31">
    <location>
        <begin position="355"/>
        <end position="364"/>
    </location>
</feature>
<feature type="strand" evidence="31">
    <location>
        <begin position="367"/>
        <end position="374"/>
    </location>
</feature>
<feature type="turn" evidence="31">
    <location>
        <begin position="375"/>
        <end position="377"/>
    </location>
</feature>
<feature type="strand" evidence="31">
    <location>
        <begin position="380"/>
        <end position="387"/>
    </location>
</feature>
<feature type="helix" evidence="31">
    <location>
        <begin position="388"/>
        <end position="393"/>
    </location>
</feature>
<feature type="helix" evidence="31">
    <location>
        <begin position="397"/>
        <end position="409"/>
    </location>
</feature>
<feature type="turn" evidence="31">
    <location>
        <begin position="410"/>
        <end position="412"/>
    </location>
</feature>
<feature type="strand" evidence="31">
    <location>
        <begin position="419"/>
        <end position="424"/>
    </location>
</feature>
<feature type="strand" evidence="31">
    <location>
        <begin position="426"/>
        <end position="434"/>
    </location>
</feature>
<feature type="strand" evidence="31">
    <location>
        <begin position="438"/>
        <end position="440"/>
    </location>
</feature>
<feature type="helix" evidence="31">
    <location>
        <begin position="441"/>
        <end position="448"/>
    </location>
</feature>
<feature type="helix" evidence="31">
    <location>
        <begin position="453"/>
        <end position="472"/>
    </location>
</feature>
<feature type="helix" evidence="31">
    <location>
        <begin position="482"/>
        <end position="484"/>
    </location>
</feature>
<feature type="strand" evidence="31">
    <location>
        <begin position="485"/>
        <end position="487"/>
    </location>
</feature>
<feature type="strand" evidence="31">
    <location>
        <begin position="493"/>
        <end position="495"/>
    </location>
</feature>
<feature type="helix" evidence="31">
    <location>
        <begin position="518"/>
        <end position="520"/>
    </location>
</feature>
<feature type="helix" evidence="31">
    <location>
        <begin position="523"/>
        <end position="526"/>
    </location>
</feature>
<feature type="helix" evidence="31">
    <location>
        <begin position="534"/>
        <end position="549"/>
    </location>
</feature>
<feature type="helix" evidence="31">
    <location>
        <begin position="559"/>
        <end position="568"/>
    </location>
</feature>
<feature type="helix" evidence="31">
    <location>
        <begin position="579"/>
        <end position="588"/>
    </location>
</feature>
<feature type="helix" evidence="31">
    <location>
        <begin position="593"/>
        <end position="595"/>
    </location>
</feature>
<feature type="helix" evidence="31">
    <location>
        <begin position="600"/>
        <end position="602"/>
    </location>
</feature>
<feature type="turn" evidence="31">
    <location>
        <begin position="603"/>
        <end position="605"/>
    </location>
</feature>
<feature type="helix" evidence="31">
    <location>
        <begin position="606"/>
        <end position="609"/>
    </location>
</feature>
<feature type="helix" evidence="31">
    <location>
        <begin position="612"/>
        <end position="614"/>
    </location>
</feature>
<feature type="helix" evidence="31">
    <location>
        <begin position="619"/>
        <end position="623"/>
    </location>
</feature>
<feature type="helix" evidence="31">
    <location>
        <begin position="646"/>
        <end position="648"/>
    </location>
</feature>
<feature type="turn" evidence="31">
    <location>
        <begin position="660"/>
        <end position="662"/>
    </location>
</feature>
<feature type="helix" evidence="31">
    <location>
        <begin position="663"/>
        <end position="665"/>
    </location>
</feature>
<feature type="helix" evidence="31">
    <location>
        <begin position="668"/>
        <end position="671"/>
    </location>
</feature>
<keyword id="KW-0002">3D-structure</keyword>
<keyword id="KW-0025">Alternative splicing</keyword>
<keyword id="KW-0067">ATP-binding</keyword>
<keyword id="KW-0963">Cytoplasm</keyword>
<keyword id="KW-0221">Differentiation</keyword>
<keyword id="KW-0418">Kinase</keyword>
<keyword id="KW-0479">Metal-binding</keyword>
<keyword id="KW-0547">Nucleotide-binding</keyword>
<keyword id="KW-0597">Phosphoprotein</keyword>
<keyword id="KW-1267">Proteomics identification</keyword>
<keyword id="KW-1185">Reference proteome</keyword>
<keyword id="KW-0677">Repeat</keyword>
<keyword id="KW-0723">Serine/threonine-protein kinase</keyword>
<keyword id="KW-0808">Transferase</keyword>
<keyword id="KW-0862">Zinc</keyword>
<keyword id="KW-0863">Zinc-finger</keyword>
<sequence length="683" mass="77828">MSSGTMKFNGYLRVRIGEAVGLQPTRWSLRHSLFKKGHQLLDPYLTVSVDQVRVGQTSTKQKTNKPTYNEEFCANVTDGGHLELAVFHETPLGYDHFVANCTLQFQELLRTTGASDTFEGWVDLEPEGKVFVVITLTGSFTEATLQRDRIFKHFTRKRQRAMRRRVHQINGHKFMATYLRQPTYCSHCREFIWGVFGKQGYQCQVCTCVVHKRCHHLIVTACTCQNNINKVDSKIAEQRFGINIPHKFSIHNYKVPTFCDHCGSLLWGIMRQGLQCKICKMNVHIRCQANVAPNCGVNAVELAKTLAGMGLQPGNISPTSKLVSRSTLRRQGKESSKEGNGIGVNSSNRLGIDNFEFIRVLGKGSFGKVMLARVKETGDLYAVKVLKKDVILQDDDVECTMTEKRILSLARNHPFLTQLFCCFQTPDRLFFVMEFVNGGDLMFHIQKSRRFDEARARFYAAEIISALMFLHDKGIIYRDLKLDNVLLDHEGHCKLADFGMCKEGICNGVTTATFCGTPDYIAPEILQEMLYGPAVDWWAMGVLLYEMLCGHAPFEAENEDDLFEAILNDEVVYPTWLHEDATGILKSFMTKNPTMRLGSLTQGGEHAILRHPFFKEIDWAQLNHRQIEPPFRPRIKSREDVSNFDPDFIKEEPVLTPIDEGHLPMINQDEFRNFSYVSPELQP</sequence>
<proteinExistence type="evidence at protein level"/>
<gene>
    <name type="primary">PRKCH</name>
    <name type="synonym">PKCL</name>
    <name type="synonym">PRKCL</name>
</gene>
<protein>
    <recommendedName>
        <fullName>Protein kinase C eta type</fullName>
        <ecNumber evidence="24">2.7.11.13</ecNumber>
    </recommendedName>
    <alternativeName>
        <fullName>PKC-L</fullName>
    </alternativeName>
    <alternativeName>
        <fullName>nPKC-eta</fullName>
    </alternativeName>
</protein>
<evidence type="ECO:0000250" key="1"/>
<evidence type="ECO:0000250" key="2">
    <source>
        <dbReference type="UniProtKB" id="P23298"/>
    </source>
</evidence>
<evidence type="ECO:0000255" key="3">
    <source>
        <dbReference type="PROSITE-ProRule" id="PRU00041"/>
    </source>
</evidence>
<evidence type="ECO:0000255" key="4">
    <source>
        <dbReference type="PROSITE-ProRule" id="PRU00159"/>
    </source>
</evidence>
<evidence type="ECO:0000255" key="5">
    <source>
        <dbReference type="PROSITE-ProRule" id="PRU00226"/>
    </source>
</evidence>
<evidence type="ECO:0000255" key="6">
    <source>
        <dbReference type="PROSITE-ProRule" id="PRU00618"/>
    </source>
</evidence>
<evidence type="ECO:0000255" key="7">
    <source>
        <dbReference type="PROSITE-ProRule" id="PRU10027"/>
    </source>
</evidence>
<evidence type="ECO:0000256" key="8">
    <source>
        <dbReference type="SAM" id="MobiDB-lite"/>
    </source>
</evidence>
<evidence type="ECO:0000269" key="9">
    <source>
    </source>
</evidence>
<evidence type="ECO:0000269" key="10">
    <source>
    </source>
</evidence>
<evidence type="ECO:0000269" key="11">
    <source>
    </source>
</evidence>
<evidence type="ECO:0000269" key="12">
    <source>
    </source>
</evidence>
<evidence type="ECO:0000269" key="13">
    <source>
    </source>
</evidence>
<evidence type="ECO:0000269" key="14">
    <source>
    </source>
</evidence>
<evidence type="ECO:0000269" key="15">
    <source>
    </source>
</evidence>
<evidence type="ECO:0000269" key="16">
    <source>
    </source>
</evidence>
<evidence type="ECO:0000269" key="17">
    <source>
    </source>
</evidence>
<evidence type="ECO:0000269" key="18">
    <source>
    </source>
</evidence>
<evidence type="ECO:0000269" key="19">
    <source>
    </source>
</evidence>
<evidence type="ECO:0000269" key="20">
    <source>
    </source>
</evidence>
<evidence type="ECO:0000269" key="21">
    <source>
    </source>
</evidence>
<evidence type="ECO:0000269" key="22">
    <source>
    </source>
</evidence>
<evidence type="ECO:0000269" key="23">
    <source>
    </source>
</evidence>
<evidence type="ECO:0000269" key="24">
    <source>
    </source>
</evidence>
<evidence type="ECO:0000303" key="25">
    <source>
    </source>
</evidence>
<evidence type="ECO:0000305" key="26"/>
<evidence type="ECO:0000305" key="27">
    <source>
    </source>
</evidence>
<evidence type="ECO:0007744" key="28">
    <source>
    </source>
</evidence>
<evidence type="ECO:0007744" key="29">
    <source>
    </source>
</evidence>
<evidence type="ECO:0007829" key="30">
    <source>
        <dbReference type="PDB" id="2FK9"/>
    </source>
</evidence>
<evidence type="ECO:0007829" key="31">
    <source>
        <dbReference type="PDB" id="8FP1"/>
    </source>
</evidence>
<dbReference type="EC" id="2.7.11.13" evidence="24"/>
<dbReference type="EMBL" id="M55284">
    <property type="protein sequence ID" value="AAA60100.1"/>
    <property type="molecule type" value="mRNA"/>
</dbReference>
<dbReference type="EMBL" id="AK290183">
    <property type="protein sequence ID" value="BAF82872.1"/>
    <property type="molecule type" value="mRNA"/>
</dbReference>
<dbReference type="EMBL" id="AK296158">
    <property type="protein sequence ID" value="BAG58897.1"/>
    <property type="molecule type" value="mRNA"/>
</dbReference>
<dbReference type="EMBL" id="AL138996">
    <property type="status" value="NOT_ANNOTATED_CDS"/>
    <property type="molecule type" value="Genomic_DNA"/>
</dbReference>
<dbReference type="EMBL" id="AL355916">
    <property type="status" value="NOT_ANNOTATED_CDS"/>
    <property type="molecule type" value="Genomic_DNA"/>
</dbReference>
<dbReference type="EMBL" id="AL359220">
    <property type="status" value="NOT_ANNOTATED_CDS"/>
    <property type="molecule type" value="Genomic_DNA"/>
</dbReference>
<dbReference type="EMBL" id="CH471061">
    <property type="protein sequence ID" value="EAW80800.1"/>
    <property type="molecule type" value="Genomic_DNA"/>
</dbReference>
<dbReference type="EMBL" id="CH471061">
    <property type="protein sequence ID" value="EAW80801.1"/>
    <property type="molecule type" value="Genomic_DNA"/>
</dbReference>
<dbReference type="EMBL" id="BC037268">
    <property type="protein sequence ID" value="AAH37268.1"/>
    <property type="molecule type" value="mRNA"/>
</dbReference>
<dbReference type="EMBL" id="S74620">
    <property type="protein sequence ID" value="AAB32724.1"/>
    <property type="molecule type" value="mRNA"/>
</dbReference>
<dbReference type="CCDS" id="CCDS9752.1">
    <molecule id="P24723-1"/>
</dbReference>
<dbReference type="PIR" id="A39666">
    <property type="entry name" value="A39666"/>
</dbReference>
<dbReference type="RefSeq" id="NP_006246.2">
    <molecule id="P24723-1"/>
    <property type="nucleotide sequence ID" value="NM_006255.4"/>
</dbReference>
<dbReference type="RefSeq" id="XP_016876947.1">
    <property type="nucleotide sequence ID" value="XM_017021458.1"/>
</dbReference>
<dbReference type="RefSeq" id="XP_024305429.1">
    <molecule id="P24723-2"/>
    <property type="nucleotide sequence ID" value="XM_024449661.2"/>
</dbReference>
<dbReference type="RefSeq" id="XP_024305430.1">
    <molecule id="P24723-2"/>
    <property type="nucleotide sequence ID" value="XM_024449662.2"/>
</dbReference>
<dbReference type="RefSeq" id="XP_054232364.1">
    <molecule id="P24723-2"/>
    <property type="nucleotide sequence ID" value="XM_054376389.1"/>
</dbReference>
<dbReference type="RefSeq" id="XP_054232365.1">
    <molecule id="P24723-2"/>
    <property type="nucleotide sequence ID" value="XM_054376390.1"/>
</dbReference>
<dbReference type="PDB" id="2FK9">
    <property type="method" value="X-ray"/>
    <property type="resolution" value="1.75 A"/>
    <property type="chains" value="A=1-138"/>
</dbReference>
<dbReference type="PDB" id="3TXO">
    <property type="method" value="X-ray"/>
    <property type="resolution" value="2.05 A"/>
    <property type="chains" value="A=333-683"/>
</dbReference>
<dbReference type="PDB" id="8FP1">
    <property type="method" value="X-ray"/>
    <property type="resolution" value="1.85 A"/>
    <property type="chains" value="A=333-683"/>
</dbReference>
<dbReference type="PDB" id="8FP3">
    <property type="method" value="X-ray"/>
    <property type="resolution" value="2.30 A"/>
    <property type="chains" value="A=333-683"/>
</dbReference>
<dbReference type="PDBsum" id="2FK9"/>
<dbReference type="PDBsum" id="3TXO"/>
<dbReference type="PDBsum" id="8FP1"/>
<dbReference type="PDBsum" id="8FP3"/>
<dbReference type="SMR" id="P24723"/>
<dbReference type="BioGRID" id="111569">
    <property type="interactions" value="29"/>
</dbReference>
<dbReference type="DIP" id="DIP-44588N"/>
<dbReference type="FunCoup" id="P24723">
    <property type="interactions" value="864"/>
</dbReference>
<dbReference type="IntAct" id="P24723">
    <property type="interactions" value="13"/>
</dbReference>
<dbReference type="MINT" id="P24723"/>
<dbReference type="STRING" id="9606.ENSP00000329127"/>
<dbReference type="BindingDB" id="P24723"/>
<dbReference type="ChEMBL" id="CHEMBL3616"/>
<dbReference type="DrugCentral" id="P24723"/>
<dbReference type="GuidetoPHARMACOLOGY" id="1487"/>
<dbReference type="GlyGen" id="P24723">
    <property type="glycosylation" value="3 sites, 3 N-linked glycans (2 sites), 1 O-linked glycan (1 site)"/>
</dbReference>
<dbReference type="iPTMnet" id="P24723"/>
<dbReference type="PhosphoSitePlus" id="P24723"/>
<dbReference type="BioMuta" id="PRKCH"/>
<dbReference type="DMDM" id="281185512"/>
<dbReference type="CPTAC" id="CPTAC-3187"/>
<dbReference type="CPTAC" id="CPTAC-3188"/>
<dbReference type="jPOST" id="P24723"/>
<dbReference type="MassIVE" id="P24723"/>
<dbReference type="PaxDb" id="9606-ENSP00000329127"/>
<dbReference type="PeptideAtlas" id="P24723"/>
<dbReference type="ProteomicsDB" id="4395"/>
<dbReference type="ProteomicsDB" id="54223">
    <molecule id="P24723-1"/>
</dbReference>
<dbReference type="Pumba" id="P24723"/>
<dbReference type="Antibodypedia" id="24422">
    <property type="antibodies" value="306 antibodies from 33 providers"/>
</dbReference>
<dbReference type="DNASU" id="5583"/>
<dbReference type="Ensembl" id="ENST00000332981.11">
    <molecule id="P24723-1"/>
    <property type="protein sequence ID" value="ENSP00000329127.5"/>
    <property type="gene ID" value="ENSG00000027075.18"/>
</dbReference>
<dbReference type="Ensembl" id="ENST00000555082.6">
    <molecule id="P24723-2"/>
    <property type="protein sequence ID" value="ENSP00000450981.1"/>
    <property type="gene ID" value="ENSG00000027075.18"/>
</dbReference>
<dbReference type="GeneID" id="5583"/>
<dbReference type="KEGG" id="hsa:5583"/>
<dbReference type="MANE-Select" id="ENST00000332981.11">
    <property type="protein sequence ID" value="ENSP00000329127.5"/>
    <property type="RefSeq nucleotide sequence ID" value="NM_006255.5"/>
    <property type="RefSeq protein sequence ID" value="NP_006246.2"/>
</dbReference>
<dbReference type="UCSC" id="uc001xfn.4">
    <molecule id="P24723-1"/>
    <property type="organism name" value="human"/>
</dbReference>
<dbReference type="AGR" id="HGNC:9403"/>
<dbReference type="CTD" id="5583"/>
<dbReference type="DisGeNET" id="5583"/>
<dbReference type="GeneCards" id="PRKCH"/>
<dbReference type="HGNC" id="HGNC:9403">
    <property type="gene designation" value="PRKCH"/>
</dbReference>
<dbReference type="HPA" id="ENSG00000027075">
    <property type="expression patterns" value="Low tissue specificity"/>
</dbReference>
<dbReference type="MalaCards" id="PRKCH"/>
<dbReference type="MIM" id="601367">
    <property type="type" value="phenotype"/>
</dbReference>
<dbReference type="MIM" id="605437">
    <property type="type" value="gene"/>
</dbReference>
<dbReference type="neXtProt" id="NX_P24723"/>
<dbReference type="OpenTargets" id="ENSG00000027075"/>
<dbReference type="PharmGKB" id="PA33767"/>
<dbReference type="VEuPathDB" id="HostDB:ENSG00000027075"/>
<dbReference type="eggNOG" id="KOG0694">
    <property type="taxonomic scope" value="Eukaryota"/>
</dbReference>
<dbReference type="GeneTree" id="ENSGT00940000158220"/>
<dbReference type="HOGENOM" id="CLU_000288_54_4_1"/>
<dbReference type="InParanoid" id="P24723"/>
<dbReference type="OMA" id="MTKNPNM"/>
<dbReference type="OrthoDB" id="63267at2759"/>
<dbReference type="PAN-GO" id="P24723">
    <property type="GO annotations" value="3 GO annotations based on evolutionary models"/>
</dbReference>
<dbReference type="PhylomeDB" id="P24723"/>
<dbReference type="TreeFam" id="TF351133"/>
<dbReference type="BRENDA" id="2.7.11.13">
    <property type="organism ID" value="2681"/>
</dbReference>
<dbReference type="PathwayCommons" id="P24723"/>
<dbReference type="Reactome" id="R-HSA-114508">
    <property type="pathway name" value="Effects of PIP2 hydrolysis"/>
</dbReference>
<dbReference type="Reactome" id="R-HSA-418597">
    <property type="pathway name" value="G alpha (z) signalling events"/>
</dbReference>
<dbReference type="SABIO-RK" id="P24723"/>
<dbReference type="SignaLink" id="P24723"/>
<dbReference type="SIGNOR" id="P24723"/>
<dbReference type="BioGRID-ORCS" id="5583">
    <property type="hits" value="14 hits in 1196 CRISPR screens"/>
</dbReference>
<dbReference type="ChiTaRS" id="PRKCH">
    <property type="organism name" value="human"/>
</dbReference>
<dbReference type="EvolutionaryTrace" id="P24723"/>
<dbReference type="GeneWiki" id="PRKCH"/>
<dbReference type="GenomeRNAi" id="5583"/>
<dbReference type="Pharos" id="P24723">
    <property type="development level" value="Tchem"/>
</dbReference>
<dbReference type="PRO" id="PR:P24723"/>
<dbReference type="Proteomes" id="UP000005640">
    <property type="component" value="Chromosome 14"/>
</dbReference>
<dbReference type="RNAct" id="P24723">
    <property type="molecule type" value="protein"/>
</dbReference>
<dbReference type="Bgee" id="ENSG00000027075">
    <property type="expression patterns" value="Expressed in parotid gland and 189 other cell types or tissues"/>
</dbReference>
<dbReference type="ExpressionAtlas" id="P24723">
    <property type="expression patterns" value="baseline and differential"/>
</dbReference>
<dbReference type="GO" id="GO:0005911">
    <property type="term" value="C:cell-cell junction"/>
    <property type="evidence" value="ECO:0007669"/>
    <property type="project" value="Ensembl"/>
</dbReference>
<dbReference type="GO" id="GO:0005737">
    <property type="term" value="C:cytoplasm"/>
    <property type="evidence" value="ECO:0000314"/>
    <property type="project" value="UniProtKB"/>
</dbReference>
<dbReference type="GO" id="GO:0005829">
    <property type="term" value="C:cytosol"/>
    <property type="evidence" value="ECO:0000250"/>
    <property type="project" value="UniProtKB"/>
</dbReference>
<dbReference type="GO" id="GO:0070062">
    <property type="term" value="C:extracellular exosome"/>
    <property type="evidence" value="ECO:0007005"/>
    <property type="project" value="UniProtKB"/>
</dbReference>
<dbReference type="GO" id="GO:0005886">
    <property type="term" value="C:plasma membrane"/>
    <property type="evidence" value="ECO:0000314"/>
    <property type="project" value="UniProtKB"/>
</dbReference>
<dbReference type="GO" id="GO:0005524">
    <property type="term" value="F:ATP binding"/>
    <property type="evidence" value="ECO:0007669"/>
    <property type="project" value="UniProtKB-KW"/>
</dbReference>
<dbReference type="GO" id="GO:0004697">
    <property type="term" value="F:diacylglycerol-dependent serine/threonine kinase activity"/>
    <property type="evidence" value="ECO:0000304"/>
    <property type="project" value="ProtInc"/>
</dbReference>
<dbReference type="GO" id="GO:0004699">
    <property type="term" value="F:diacylglycerol-dependent, calcium-independent serine/threonine kinase activity"/>
    <property type="evidence" value="ECO:0007669"/>
    <property type="project" value="Ensembl"/>
</dbReference>
<dbReference type="GO" id="GO:0019899">
    <property type="term" value="F:enzyme binding"/>
    <property type="evidence" value="ECO:0000353"/>
    <property type="project" value="UniProtKB"/>
</dbReference>
<dbReference type="GO" id="GO:0004672">
    <property type="term" value="F:protein kinase activity"/>
    <property type="evidence" value="ECO:0000314"/>
    <property type="project" value="UniProtKB"/>
</dbReference>
<dbReference type="GO" id="GO:0106310">
    <property type="term" value="F:protein serine kinase activity"/>
    <property type="evidence" value="ECO:0007669"/>
    <property type="project" value="RHEA"/>
</dbReference>
<dbReference type="GO" id="GO:0004674">
    <property type="term" value="F:protein serine/threonine kinase activity"/>
    <property type="evidence" value="ECO:0000318"/>
    <property type="project" value="GO_Central"/>
</dbReference>
<dbReference type="GO" id="GO:0031267">
    <property type="term" value="F:small GTPase binding"/>
    <property type="evidence" value="ECO:0007669"/>
    <property type="project" value="Ensembl"/>
</dbReference>
<dbReference type="GO" id="GO:0008270">
    <property type="term" value="F:zinc ion binding"/>
    <property type="evidence" value="ECO:0007669"/>
    <property type="project" value="UniProtKB-KW"/>
</dbReference>
<dbReference type="GO" id="GO:0030154">
    <property type="term" value="P:cell differentiation"/>
    <property type="evidence" value="ECO:0007669"/>
    <property type="project" value="UniProtKB-KW"/>
</dbReference>
<dbReference type="GO" id="GO:0035556">
    <property type="term" value="P:intracellular signal transduction"/>
    <property type="evidence" value="ECO:0000318"/>
    <property type="project" value="GO_Central"/>
</dbReference>
<dbReference type="GO" id="GO:0034351">
    <property type="term" value="P:negative regulation of glial cell apoptotic process"/>
    <property type="evidence" value="ECO:0000315"/>
    <property type="project" value="UniProtKB"/>
</dbReference>
<dbReference type="GO" id="GO:0141212">
    <property type="term" value="P:phospholipase C/protein kinase C signal transduction"/>
    <property type="evidence" value="ECO:0007669"/>
    <property type="project" value="Ensembl"/>
</dbReference>
<dbReference type="GO" id="GO:0050861">
    <property type="term" value="P:positive regulation of B cell receptor signaling pathway"/>
    <property type="evidence" value="ECO:0000315"/>
    <property type="project" value="UniProtKB"/>
</dbReference>
<dbReference type="GO" id="GO:0060252">
    <property type="term" value="P:positive regulation of glial cell proliferation"/>
    <property type="evidence" value="ECO:0000315"/>
    <property type="project" value="UniProtKB"/>
</dbReference>
<dbReference type="GO" id="GO:0045618">
    <property type="term" value="P:positive regulation of keratinocyte differentiation"/>
    <property type="evidence" value="ECO:0000250"/>
    <property type="project" value="UniProtKB"/>
</dbReference>
<dbReference type="GO" id="GO:0010744">
    <property type="term" value="P:positive regulation of macrophage derived foam cell differentiation"/>
    <property type="evidence" value="ECO:0000250"/>
    <property type="project" value="UniProtKB"/>
</dbReference>
<dbReference type="GO" id="GO:0051092">
    <property type="term" value="P:positive regulation of NF-kappaB transcription factor activity"/>
    <property type="evidence" value="ECO:0000315"/>
    <property type="project" value="UniProtKB"/>
</dbReference>
<dbReference type="GO" id="GO:1903078">
    <property type="term" value="P:positive regulation of protein localization to plasma membrane"/>
    <property type="evidence" value="ECO:0000304"/>
    <property type="project" value="ParkinsonsUK-UCL"/>
</dbReference>
<dbReference type="GO" id="GO:0006468">
    <property type="term" value="P:protein phosphorylation"/>
    <property type="evidence" value="ECO:0000314"/>
    <property type="project" value="UniProtKB"/>
</dbReference>
<dbReference type="GO" id="GO:2000810">
    <property type="term" value="P:regulation of bicellular tight junction assembly"/>
    <property type="evidence" value="ECO:0000315"/>
    <property type="project" value="UniProtKB"/>
</dbReference>
<dbReference type="GO" id="GO:0007165">
    <property type="term" value="P:signal transduction"/>
    <property type="evidence" value="ECO:0000304"/>
    <property type="project" value="ProtInc"/>
</dbReference>
<dbReference type="CDD" id="cd20835">
    <property type="entry name" value="C1_nPKC_epsilon-like_rpt1"/>
    <property type="match status" value="1"/>
</dbReference>
<dbReference type="CDD" id="cd20838">
    <property type="entry name" value="C1_nPKC_epsilon-like_rpt2"/>
    <property type="match status" value="1"/>
</dbReference>
<dbReference type="CDD" id="cd04014">
    <property type="entry name" value="C2_PKC_epsilon"/>
    <property type="match status" value="1"/>
</dbReference>
<dbReference type="CDD" id="cd05590">
    <property type="entry name" value="STKc_nPKC_eta"/>
    <property type="match status" value="1"/>
</dbReference>
<dbReference type="FunFam" id="3.30.200.20:FF:000080">
    <property type="entry name" value="Protein kinase C"/>
    <property type="match status" value="1"/>
</dbReference>
<dbReference type="FunFam" id="3.30.60.20:FF:000003">
    <property type="entry name" value="Protein kinase C delta"/>
    <property type="match status" value="1"/>
</dbReference>
<dbReference type="FunFam" id="1.10.510.10:FF:000126">
    <property type="entry name" value="Protein kinase C epsilon"/>
    <property type="match status" value="1"/>
</dbReference>
<dbReference type="FunFam" id="2.60.40.150:FF:000056">
    <property type="entry name" value="Protein kinase C epsilon"/>
    <property type="match status" value="1"/>
</dbReference>
<dbReference type="FunFam" id="3.30.60.20:FF:000024">
    <property type="entry name" value="Protein kinase C epsilon"/>
    <property type="match status" value="1"/>
</dbReference>
<dbReference type="Gene3D" id="3.30.60.20">
    <property type="match status" value="2"/>
</dbReference>
<dbReference type="Gene3D" id="2.60.40.150">
    <property type="entry name" value="C2 domain"/>
    <property type="match status" value="1"/>
</dbReference>
<dbReference type="Gene3D" id="3.30.200.20">
    <property type="entry name" value="Phosphorylase Kinase, domain 1"/>
    <property type="match status" value="1"/>
</dbReference>
<dbReference type="Gene3D" id="1.10.510.10">
    <property type="entry name" value="Transferase(Phosphotransferase) domain 1"/>
    <property type="match status" value="1"/>
</dbReference>
<dbReference type="InterPro" id="IPR000961">
    <property type="entry name" value="AGC-kinase_C"/>
</dbReference>
<dbReference type="InterPro" id="IPR046349">
    <property type="entry name" value="C1-like_sf"/>
</dbReference>
<dbReference type="InterPro" id="IPR000008">
    <property type="entry name" value="C2_dom"/>
</dbReference>
<dbReference type="InterPro" id="IPR035892">
    <property type="entry name" value="C2_domain_sf"/>
</dbReference>
<dbReference type="InterPro" id="IPR020454">
    <property type="entry name" value="DAG/PE-bd"/>
</dbReference>
<dbReference type="InterPro" id="IPR011009">
    <property type="entry name" value="Kinase-like_dom_sf"/>
</dbReference>
<dbReference type="InterPro" id="IPR034665">
    <property type="entry name" value="nPKC_eta"/>
</dbReference>
<dbReference type="InterPro" id="IPR002219">
    <property type="entry name" value="PE/DAG-bd"/>
</dbReference>
<dbReference type="InterPro" id="IPR027431">
    <property type="entry name" value="PKC_eta"/>
</dbReference>
<dbReference type="InterPro" id="IPR017892">
    <property type="entry name" value="Pkinase_C"/>
</dbReference>
<dbReference type="InterPro" id="IPR014376">
    <property type="entry name" value="Prot_kin_PKC_delta"/>
</dbReference>
<dbReference type="InterPro" id="IPR000719">
    <property type="entry name" value="Prot_kinase_dom"/>
</dbReference>
<dbReference type="InterPro" id="IPR017441">
    <property type="entry name" value="Protein_kinase_ATP_BS"/>
</dbReference>
<dbReference type="InterPro" id="IPR008271">
    <property type="entry name" value="Ser/Thr_kinase_AS"/>
</dbReference>
<dbReference type="PANTHER" id="PTHR24351">
    <property type="entry name" value="RIBOSOMAL PROTEIN S6 KINASE"/>
    <property type="match status" value="1"/>
</dbReference>
<dbReference type="Pfam" id="PF00130">
    <property type="entry name" value="C1_1"/>
    <property type="match status" value="2"/>
</dbReference>
<dbReference type="Pfam" id="PF00168">
    <property type="entry name" value="C2"/>
    <property type="match status" value="1"/>
</dbReference>
<dbReference type="Pfam" id="PF00069">
    <property type="entry name" value="Pkinase"/>
    <property type="match status" value="1"/>
</dbReference>
<dbReference type="Pfam" id="PF00433">
    <property type="entry name" value="Pkinase_C"/>
    <property type="match status" value="1"/>
</dbReference>
<dbReference type="PIRSF" id="PIRSF000551">
    <property type="entry name" value="PKC_delta"/>
    <property type="match status" value="1"/>
</dbReference>
<dbReference type="PIRSF" id="PIRSF501107">
    <property type="entry name" value="Protein_kin_C_eta"/>
    <property type="match status" value="1"/>
</dbReference>
<dbReference type="PRINTS" id="PR00008">
    <property type="entry name" value="DAGPEDOMAIN"/>
</dbReference>
<dbReference type="SMART" id="SM00109">
    <property type="entry name" value="C1"/>
    <property type="match status" value="2"/>
</dbReference>
<dbReference type="SMART" id="SM00239">
    <property type="entry name" value="C2"/>
    <property type="match status" value="1"/>
</dbReference>
<dbReference type="SMART" id="SM00133">
    <property type="entry name" value="S_TK_X"/>
    <property type="match status" value="1"/>
</dbReference>
<dbReference type="SMART" id="SM00220">
    <property type="entry name" value="S_TKc"/>
    <property type="match status" value="1"/>
</dbReference>
<dbReference type="SUPFAM" id="SSF49562">
    <property type="entry name" value="C2 domain (Calcium/lipid-binding domain, CaLB)"/>
    <property type="match status" value="1"/>
</dbReference>
<dbReference type="SUPFAM" id="SSF57889">
    <property type="entry name" value="Cysteine-rich domain"/>
    <property type="match status" value="2"/>
</dbReference>
<dbReference type="SUPFAM" id="SSF56112">
    <property type="entry name" value="Protein kinase-like (PK-like)"/>
    <property type="match status" value="1"/>
</dbReference>
<dbReference type="PROSITE" id="PS51285">
    <property type="entry name" value="AGC_KINASE_CTER"/>
    <property type="match status" value="1"/>
</dbReference>
<dbReference type="PROSITE" id="PS50004">
    <property type="entry name" value="C2"/>
    <property type="match status" value="1"/>
</dbReference>
<dbReference type="PROSITE" id="PS00107">
    <property type="entry name" value="PROTEIN_KINASE_ATP"/>
    <property type="match status" value="1"/>
</dbReference>
<dbReference type="PROSITE" id="PS50011">
    <property type="entry name" value="PROTEIN_KINASE_DOM"/>
    <property type="match status" value="1"/>
</dbReference>
<dbReference type="PROSITE" id="PS00108">
    <property type="entry name" value="PROTEIN_KINASE_ST"/>
    <property type="match status" value="1"/>
</dbReference>
<dbReference type="PROSITE" id="PS00479">
    <property type="entry name" value="ZF_DAG_PE_1"/>
    <property type="match status" value="2"/>
</dbReference>
<dbReference type="PROSITE" id="PS50081">
    <property type="entry name" value="ZF_DAG_PE_2"/>
    <property type="match status" value="2"/>
</dbReference>
<name>KPCL_HUMAN</name>
<reference key="1">
    <citation type="journal article" date="1991" name="Mol. Cell. Biol.">
        <title>Isolation and characterization of PKC-L, a new member of the protein kinase C-related gene family specifically expressed in lung, skin, and heart.</title>
        <authorList>
            <person name="Bacher N."/>
            <person name="Zisman Y."/>
            <person name="Berent E."/>
            <person name="Livneh E."/>
        </authorList>
    </citation>
    <scope>NUCLEOTIDE SEQUENCE [MRNA] (ISOFORM 1)</scope>
    <scope>TISSUE SPECIFICITY</scope>
    <source>
        <tissue>Lung</tissue>
    </source>
</reference>
<reference key="2">
    <citation type="journal article" date="1992" name="Mol. Cell. Biol.">
        <authorList>
            <person name="Bacher N."/>
            <person name="Zisman Y."/>
            <person name="Berent E."/>
            <person name="Livneh E."/>
        </authorList>
    </citation>
    <scope>ERRATUM OF PUBMED:1986216</scope>
    <scope>SEQUENCE REVISION</scope>
</reference>
<reference key="3">
    <citation type="journal article" date="2004" name="Nat. Genet.">
        <title>Complete sequencing and characterization of 21,243 full-length human cDNAs.</title>
        <authorList>
            <person name="Ota T."/>
            <person name="Suzuki Y."/>
            <person name="Nishikawa T."/>
            <person name="Otsuki T."/>
            <person name="Sugiyama T."/>
            <person name="Irie R."/>
            <person name="Wakamatsu A."/>
            <person name="Hayashi K."/>
            <person name="Sato H."/>
            <person name="Nagai K."/>
            <person name="Kimura K."/>
            <person name="Makita H."/>
            <person name="Sekine M."/>
            <person name="Obayashi M."/>
            <person name="Nishi T."/>
            <person name="Shibahara T."/>
            <person name="Tanaka T."/>
            <person name="Ishii S."/>
            <person name="Yamamoto J."/>
            <person name="Saito K."/>
            <person name="Kawai Y."/>
            <person name="Isono Y."/>
            <person name="Nakamura Y."/>
            <person name="Nagahari K."/>
            <person name="Murakami K."/>
            <person name="Yasuda T."/>
            <person name="Iwayanagi T."/>
            <person name="Wagatsuma M."/>
            <person name="Shiratori A."/>
            <person name="Sudo H."/>
            <person name="Hosoiri T."/>
            <person name="Kaku Y."/>
            <person name="Kodaira H."/>
            <person name="Kondo H."/>
            <person name="Sugawara M."/>
            <person name="Takahashi M."/>
            <person name="Kanda K."/>
            <person name="Yokoi T."/>
            <person name="Furuya T."/>
            <person name="Kikkawa E."/>
            <person name="Omura Y."/>
            <person name="Abe K."/>
            <person name="Kamihara K."/>
            <person name="Katsuta N."/>
            <person name="Sato K."/>
            <person name="Tanikawa M."/>
            <person name="Yamazaki M."/>
            <person name="Ninomiya K."/>
            <person name="Ishibashi T."/>
            <person name="Yamashita H."/>
            <person name="Murakawa K."/>
            <person name="Fujimori K."/>
            <person name="Tanai H."/>
            <person name="Kimata M."/>
            <person name="Watanabe M."/>
            <person name="Hiraoka S."/>
            <person name="Chiba Y."/>
            <person name="Ishida S."/>
            <person name="Ono Y."/>
            <person name="Takiguchi S."/>
            <person name="Watanabe S."/>
            <person name="Yosida M."/>
            <person name="Hotuta T."/>
            <person name="Kusano J."/>
            <person name="Kanehori K."/>
            <person name="Takahashi-Fujii A."/>
            <person name="Hara H."/>
            <person name="Tanase T.-O."/>
            <person name="Nomura Y."/>
            <person name="Togiya S."/>
            <person name="Komai F."/>
            <person name="Hara R."/>
            <person name="Takeuchi K."/>
            <person name="Arita M."/>
            <person name="Imose N."/>
            <person name="Musashino K."/>
            <person name="Yuuki H."/>
            <person name="Oshima A."/>
            <person name="Sasaki N."/>
            <person name="Aotsuka S."/>
            <person name="Yoshikawa Y."/>
            <person name="Matsunawa H."/>
            <person name="Ichihara T."/>
            <person name="Shiohata N."/>
            <person name="Sano S."/>
            <person name="Moriya S."/>
            <person name="Momiyama H."/>
            <person name="Satoh N."/>
            <person name="Takami S."/>
            <person name="Terashima Y."/>
            <person name="Suzuki O."/>
            <person name="Nakagawa S."/>
            <person name="Senoh A."/>
            <person name="Mizoguchi H."/>
            <person name="Goto Y."/>
            <person name="Shimizu F."/>
            <person name="Wakebe H."/>
            <person name="Hishigaki H."/>
            <person name="Watanabe T."/>
            <person name="Sugiyama A."/>
            <person name="Takemoto M."/>
            <person name="Kawakami B."/>
            <person name="Yamazaki M."/>
            <person name="Watanabe K."/>
            <person name="Kumagai A."/>
            <person name="Itakura S."/>
            <person name="Fukuzumi Y."/>
            <person name="Fujimori Y."/>
            <person name="Komiyama M."/>
            <person name="Tashiro H."/>
            <person name="Tanigami A."/>
            <person name="Fujiwara T."/>
            <person name="Ono T."/>
            <person name="Yamada K."/>
            <person name="Fujii Y."/>
            <person name="Ozaki K."/>
            <person name="Hirao M."/>
            <person name="Ohmori Y."/>
            <person name="Kawabata A."/>
            <person name="Hikiji T."/>
            <person name="Kobatake N."/>
            <person name="Inagaki H."/>
            <person name="Ikema Y."/>
            <person name="Okamoto S."/>
            <person name="Okitani R."/>
            <person name="Kawakami T."/>
            <person name="Noguchi S."/>
            <person name="Itoh T."/>
            <person name="Shigeta K."/>
            <person name="Senba T."/>
            <person name="Matsumura K."/>
            <person name="Nakajima Y."/>
            <person name="Mizuno T."/>
            <person name="Morinaga M."/>
            <person name="Sasaki M."/>
            <person name="Togashi T."/>
            <person name="Oyama M."/>
            <person name="Hata H."/>
            <person name="Watanabe M."/>
            <person name="Komatsu T."/>
            <person name="Mizushima-Sugano J."/>
            <person name="Satoh T."/>
            <person name="Shirai Y."/>
            <person name="Takahashi Y."/>
            <person name="Nakagawa K."/>
            <person name="Okumura K."/>
            <person name="Nagase T."/>
            <person name="Nomura N."/>
            <person name="Kikuchi H."/>
            <person name="Masuho Y."/>
            <person name="Yamashita R."/>
            <person name="Nakai K."/>
            <person name="Yada T."/>
            <person name="Nakamura Y."/>
            <person name="Ohara O."/>
            <person name="Isogai T."/>
            <person name="Sugano S."/>
        </authorList>
    </citation>
    <scope>NUCLEOTIDE SEQUENCE [LARGE SCALE MRNA] (ISOFORMS 1 AND 2)</scope>
    <source>
        <tissue>Thalamus</tissue>
    </source>
</reference>
<reference key="4">
    <citation type="journal article" date="2003" name="Nature">
        <title>The DNA sequence and analysis of human chromosome 14.</title>
        <authorList>
            <person name="Heilig R."/>
            <person name="Eckenberg R."/>
            <person name="Petit J.-L."/>
            <person name="Fonknechten N."/>
            <person name="Da Silva C."/>
            <person name="Cattolico L."/>
            <person name="Levy M."/>
            <person name="Barbe V."/>
            <person name="De Berardinis V."/>
            <person name="Ureta-Vidal A."/>
            <person name="Pelletier E."/>
            <person name="Vico V."/>
            <person name="Anthouard V."/>
            <person name="Rowen L."/>
            <person name="Madan A."/>
            <person name="Qin S."/>
            <person name="Sun H."/>
            <person name="Du H."/>
            <person name="Pepin K."/>
            <person name="Artiguenave F."/>
            <person name="Robert C."/>
            <person name="Cruaud C."/>
            <person name="Bruels T."/>
            <person name="Jaillon O."/>
            <person name="Friedlander L."/>
            <person name="Samson G."/>
            <person name="Brottier P."/>
            <person name="Cure S."/>
            <person name="Segurens B."/>
            <person name="Aniere F."/>
            <person name="Samain S."/>
            <person name="Crespeau H."/>
            <person name="Abbasi N."/>
            <person name="Aiach N."/>
            <person name="Boscus D."/>
            <person name="Dickhoff R."/>
            <person name="Dors M."/>
            <person name="Dubois I."/>
            <person name="Friedman C."/>
            <person name="Gouyvenoux M."/>
            <person name="James R."/>
            <person name="Madan A."/>
            <person name="Mairey-Estrada B."/>
            <person name="Mangenot S."/>
            <person name="Martins N."/>
            <person name="Menard M."/>
            <person name="Oztas S."/>
            <person name="Ratcliffe A."/>
            <person name="Shaffer T."/>
            <person name="Trask B."/>
            <person name="Vacherie B."/>
            <person name="Bellemere C."/>
            <person name="Belser C."/>
            <person name="Besnard-Gonnet M."/>
            <person name="Bartol-Mavel D."/>
            <person name="Boutard M."/>
            <person name="Briez-Silla S."/>
            <person name="Combette S."/>
            <person name="Dufosse-Laurent V."/>
            <person name="Ferron C."/>
            <person name="Lechaplais C."/>
            <person name="Louesse C."/>
            <person name="Muselet D."/>
            <person name="Magdelenat G."/>
            <person name="Pateau E."/>
            <person name="Petit E."/>
            <person name="Sirvain-Trukniewicz P."/>
            <person name="Trybou A."/>
            <person name="Vega-Czarny N."/>
            <person name="Bataille E."/>
            <person name="Bluet E."/>
            <person name="Bordelais I."/>
            <person name="Dubois M."/>
            <person name="Dumont C."/>
            <person name="Guerin T."/>
            <person name="Haffray S."/>
            <person name="Hammadi R."/>
            <person name="Muanga J."/>
            <person name="Pellouin V."/>
            <person name="Robert D."/>
            <person name="Wunderle E."/>
            <person name="Gauguet G."/>
            <person name="Roy A."/>
            <person name="Sainte-Marthe L."/>
            <person name="Verdier J."/>
            <person name="Verdier-Discala C."/>
            <person name="Hillier L.W."/>
            <person name="Fulton L."/>
            <person name="McPherson J."/>
            <person name="Matsuda F."/>
            <person name="Wilson R."/>
            <person name="Scarpelli C."/>
            <person name="Gyapay G."/>
            <person name="Wincker P."/>
            <person name="Saurin W."/>
            <person name="Quetier F."/>
            <person name="Waterston R."/>
            <person name="Hood L."/>
            <person name="Weissenbach J."/>
        </authorList>
    </citation>
    <scope>NUCLEOTIDE SEQUENCE [LARGE SCALE GENOMIC DNA]</scope>
</reference>
<reference key="5">
    <citation type="submission" date="2005-07" db="EMBL/GenBank/DDBJ databases">
        <authorList>
            <person name="Mural R.J."/>
            <person name="Istrail S."/>
            <person name="Sutton G.G."/>
            <person name="Florea L."/>
            <person name="Halpern A.L."/>
            <person name="Mobarry C.M."/>
            <person name="Lippert R."/>
            <person name="Walenz B."/>
            <person name="Shatkay H."/>
            <person name="Dew I."/>
            <person name="Miller J.R."/>
            <person name="Flanigan M.J."/>
            <person name="Edwards N.J."/>
            <person name="Bolanos R."/>
            <person name="Fasulo D."/>
            <person name="Halldorsson B.V."/>
            <person name="Hannenhalli S."/>
            <person name="Turner R."/>
            <person name="Yooseph S."/>
            <person name="Lu F."/>
            <person name="Nusskern D.R."/>
            <person name="Shue B.C."/>
            <person name="Zheng X.H."/>
            <person name="Zhong F."/>
            <person name="Delcher A.L."/>
            <person name="Huson D.H."/>
            <person name="Kravitz S.A."/>
            <person name="Mouchard L."/>
            <person name="Reinert K."/>
            <person name="Remington K.A."/>
            <person name="Clark A.G."/>
            <person name="Waterman M.S."/>
            <person name="Eichler E.E."/>
            <person name="Adams M.D."/>
            <person name="Hunkapiller M.W."/>
            <person name="Myers E.W."/>
            <person name="Venter J.C."/>
        </authorList>
    </citation>
    <scope>NUCLEOTIDE SEQUENCE [LARGE SCALE GENOMIC DNA]</scope>
</reference>
<reference key="6">
    <citation type="journal article" date="2004" name="Genome Res.">
        <title>The status, quality, and expansion of the NIH full-length cDNA project: the Mammalian Gene Collection (MGC).</title>
        <authorList>
            <consortium name="The MGC Project Team"/>
        </authorList>
    </citation>
    <scope>NUCLEOTIDE SEQUENCE [LARGE SCALE MRNA] (ISOFORM 1)</scope>
    <source>
        <tissue>Testis</tissue>
    </source>
</reference>
<reference key="7">
    <citation type="journal article" date="1994" name="FEBS Lett.">
        <title>Identification of multiple, novel, protein kinase C-related gene products.</title>
        <authorList>
            <person name="Palmer R.H."/>
            <person name="Ridden J."/>
            <person name="Parker P.J."/>
        </authorList>
    </citation>
    <scope>NUCLEOTIDE SEQUENCE [MRNA] OF 438-539 (ISOFORM 1)</scope>
</reference>
<reference key="8">
    <citation type="journal article" date="2000" name="Biochem. Biophys. Res. Commun.">
        <title>Overexpression of protein kinase C-eta attenuates caspase activation and tumor necrosis factor-alpha-induced cell death.</title>
        <authorList>
            <person name="Akkaraju G.R."/>
            <person name="Basu A."/>
        </authorList>
    </citation>
    <scope>FUNCTION</scope>
</reference>
<reference key="9">
    <citation type="journal article" date="2000" name="J. Biol. Chem.">
        <title>Phorbol 12-myristate 13-acetate induces protein kinase ceta-specific proliferative response in astrocytic tumor cells.</title>
        <authorList>
            <person name="Hussaini I.M."/>
            <person name="Karns L.R."/>
            <person name="Vinton G."/>
            <person name="Carpenter J.E."/>
            <person name="Redpath G.T."/>
            <person name="Sando J.J."/>
            <person name="VandenBerg S.R."/>
        </authorList>
    </citation>
    <scope>FUNCTION IN CELL PROLIFERATION</scope>
</reference>
<reference key="10">
    <citation type="journal article" date="2002" name="Neuro-oncol.">
        <title>Protein kinase C-eta regulates resistance to UV- and gamma-irradiation-induced apoptosis in glioblastoma cells by preventing caspase-9 activation.</title>
        <authorList>
            <person name="Hussaini I.M."/>
            <person name="Carpenter J.E."/>
            <person name="Redpath G.T."/>
            <person name="Sando J.J."/>
            <person name="Shaffrey M.E."/>
            <person name="Vandenberg S.R."/>
        </authorList>
    </citation>
    <scope>FUNCTION</scope>
</reference>
<reference key="11">
    <citation type="journal article" date="2004" name="Oncogene">
        <title>PKC-eta mediates glioblastoma cell proliferation through the Akt and mTOR signaling pathways.</title>
        <authorList>
            <person name="Aeder S.E."/>
            <person name="Martin P.M."/>
            <person name="Soh J.W."/>
            <person name="Hussaini I.M."/>
        </authorList>
    </citation>
    <scope>FUNCTION IN CELL PROLIFERATION</scope>
</reference>
<reference key="12">
    <citation type="journal article" date="2005" name="J. Biol. Chem.">
        <title>Translocation of diacylglycerol kinase theta from cytosol to plasma membrane in response to activation of G protein-coupled receptors and protein kinase C.</title>
        <authorList>
            <person name="van Baal J."/>
            <person name="de Widt J."/>
            <person name="Divecha N."/>
            <person name="van Blitterswijk W.J."/>
        </authorList>
    </citation>
    <scope>INTERACTION WITH DGKQ</scope>
</reference>
<reference key="13">
    <citation type="journal article" date="2007" name="Oncogene">
        <title>The protein kinase C-eta isoform induces proliferation in glioblastoma cell lines through an ERK/Elk-1 pathway.</title>
        <authorList>
            <person name="Uht R.M."/>
            <person name="Amos S."/>
            <person name="Martin P.M."/>
            <person name="Riggan A.E."/>
            <person name="Hussaini I.M."/>
        </authorList>
    </citation>
    <scope>FUNCTION</scope>
</reference>
<reference key="14">
    <citation type="journal article" date="2008" name="Int. Immunol.">
        <title>PKC eta directs induction of IRF-4 expression and Ig kappa gene rearrangement in pre-BCR signaling pathway.</title>
        <authorList>
            <person name="Oda A."/>
            <person name="Ono T."/>
            <person name="Yamamoto M."/>
            <person name="Goitsuka R."/>
            <person name="Kitamura D."/>
        </authorList>
    </citation>
    <scope>FUNCTION IN B-CELL SIGNALING</scope>
</reference>
<reference key="15">
    <citation type="journal article" date="2009" name="Anal. Chem.">
        <title>Lys-N and trypsin cover complementary parts of the phosphoproteome in a refined SCX-based approach.</title>
        <authorList>
            <person name="Gauci S."/>
            <person name="Helbig A.O."/>
            <person name="Slijper M."/>
            <person name="Krijgsveld J."/>
            <person name="Heck A.J."/>
            <person name="Mohammed S."/>
        </authorList>
    </citation>
    <scope>IDENTIFICATION BY MASS SPECTROMETRY [LARGE SCALE ANALYSIS]</scope>
</reference>
<reference key="16">
    <citation type="journal article" date="2009" name="Mol. Cell. Biol.">
        <title>Translational control of protein kinase Ceta by two upstream open reading frames.</title>
        <authorList>
            <person name="Raveh-Amit H."/>
            <person name="Maissel A."/>
            <person name="Poller J."/>
            <person name="Marom L."/>
            <person name="Elroy-Stein O."/>
            <person name="Shapira M."/>
            <person name="Livneh E."/>
        </authorList>
    </citation>
    <scope>INDUCTION</scope>
</reference>
<reference key="17">
    <citation type="journal article" date="2009" name="Proc. Natl. Acad. Sci. U.S.A.">
        <title>PKC eta regulates occludin phosphorylation and epithelial tight junction integrity.</title>
        <authorList>
            <person name="Suzuki T."/>
            <person name="Elias B.C."/>
            <person name="Seth A."/>
            <person name="Shen L."/>
            <person name="Turner J.R."/>
            <person name="Giorgianni F."/>
            <person name="Desiderio D."/>
            <person name="Guntaka R."/>
            <person name="Rao R."/>
        </authorList>
    </citation>
    <scope>FUNCTION IN PHOSPHORYLATION OF OCLN</scope>
</reference>
<reference key="18">
    <citation type="journal article" date="2010" name="Mol. Pharmacol.">
        <title>Protein kinase C-eta and phospholipase D2 pathway regulates foam cell formation via regulator of G protein signaling 2.</title>
        <authorList>
            <person name="Lee H.K."/>
            <person name="Yeo S."/>
            <person name="Kim J.S."/>
            <person name="Lee J.G."/>
            <person name="Bae Y.S."/>
            <person name="Lee C."/>
            <person name="Baek S.H."/>
        </authorList>
    </citation>
    <scope>FUNCTION</scope>
</reference>
<reference key="19">
    <citation type="journal article" date="2011" name="Biochem. Biophys. Res. Commun.">
        <title>Protein kinase C? activates NF-?B in response to camptothecin-induced DNA damage.</title>
        <authorList>
            <person name="Raveh-Amit H."/>
            <person name="Hai N."/>
            <person name="Rotem-Dai N."/>
            <person name="Shahaf G."/>
            <person name="Gopas J."/>
            <person name="Livneh E."/>
        </authorList>
    </citation>
    <scope>FUNCTION</scope>
</reference>
<reference key="20">
    <citation type="journal article" date="2002" name="J. Biochem.">
        <title>Protein kinase C eta (PKC eta): its involvement in keratinocyte differentiation.</title>
        <authorList>
            <person name="Kashiwagi M."/>
            <person name="Ohba M."/>
            <person name="Chida K."/>
            <person name="Kuroki T."/>
        </authorList>
    </citation>
    <scope>REVIEW</scope>
</reference>
<reference key="21">
    <citation type="journal article" date="2012" name="Cell">
        <title>PKCepsilon promotes oncogenic functions of ATF2 in the nucleus while blocking its apoptotic function at mitochondria.</title>
        <authorList>
            <person name="Lau E."/>
            <person name="Kluger H."/>
            <person name="Varsano T."/>
            <person name="Lee K."/>
            <person name="Scheffler I."/>
            <person name="Rimm D.L."/>
            <person name="Ideker T."/>
            <person name="Ronai Z.A."/>
        </authorList>
    </citation>
    <scope>FUNCTION</scope>
</reference>
<reference key="22">
    <citation type="journal article" date="2013" name="J. Proteome Res.">
        <title>Toward a comprehensive characterization of a human cancer cell phosphoproteome.</title>
        <authorList>
            <person name="Zhou H."/>
            <person name="Di Palma S."/>
            <person name="Preisinger C."/>
            <person name="Peng M."/>
            <person name="Polat A.N."/>
            <person name="Heck A.J."/>
            <person name="Mohammed S."/>
        </authorList>
    </citation>
    <scope>PHOSPHORYLATION [LARGE SCALE ANALYSIS] AT SER-28</scope>
    <scope>IDENTIFICATION BY MASS SPECTROMETRY [LARGE SCALE ANALYSIS]</scope>
    <source>
        <tissue>Erythroleukemia</tissue>
    </source>
</reference>
<reference key="23">
    <citation type="journal article" date="2014" name="J. Proteomics">
        <title>An enzyme assisted RP-RPLC approach for in-depth analysis of human liver phosphoproteome.</title>
        <authorList>
            <person name="Bian Y."/>
            <person name="Song C."/>
            <person name="Cheng K."/>
            <person name="Dong M."/>
            <person name="Wang F."/>
            <person name="Huang J."/>
            <person name="Sun D."/>
            <person name="Wang L."/>
            <person name="Ye M."/>
            <person name="Zou H."/>
        </authorList>
    </citation>
    <scope>PHOSPHORYLATION [LARGE SCALE ANALYSIS] AT THR-656</scope>
    <scope>IDENTIFICATION BY MASS SPECTROMETRY [LARGE SCALE ANALYSIS]</scope>
    <source>
        <tissue>Liver</tissue>
    </source>
</reference>
<reference key="24">
    <citation type="journal article" date="2021" name="Proc. Natl. Acad. Sci. U.S.A.">
        <title>Unraveling the hidden role of a uORF-encoded peptide as a kinase inhibitor of PKCs.</title>
        <authorList>
            <person name="Jayaram D.R."/>
            <person name="Frost S."/>
            <person name="Argov C."/>
            <person name="Liju V.B."/>
            <person name="Anto N.P."/>
            <person name="Muraleedharan A."/>
            <person name="Ben-Ari A."/>
            <person name="Sinay R."/>
            <person name="Smoly I."/>
            <person name="Novoplansky O."/>
            <person name="Isakov N."/>
            <person name="Toiber D."/>
            <person name="Keasar C."/>
            <person name="Elkabets M."/>
            <person name="Yeger-Lotem E."/>
            <person name="Livneh E."/>
        </authorList>
    </citation>
    <scope>CATALYTIC ACTIVITY</scope>
    <scope>ACTIVITY REGULATION</scope>
    <scope>INTERACTION WITH PRKCH UPSTREAM OPEN READING FRAME 2</scope>
    <scope>PHOSPHORYLATION AT THR-656 AND SER-675</scope>
</reference>
<reference key="25">
    <citation type="journal article" date="2006" name="Biochem. Biophys. Res. Commun.">
        <title>Structure of human protein kinase C eta (PKCeta) C2 domain and identification of phosphorylation sites.</title>
        <authorList>
            <person name="Littler D.R."/>
            <person name="Walker J.R."/>
            <person name="She Y.-M."/>
            <person name="Finerty P.J. Jr."/>
            <person name="Newman E.M."/>
            <person name="Dhe-Paganon S."/>
        </authorList>
    </citation>
    <scope>X-RAY CRYSTALLOGRAPHY (1.75 ANGSTROMS) OF 1-138</scope>
    <scope>PHOSPHORYLATION AT SER-28 AND SER-32</scope>
    <scope>IDENTIFICATION BY MASS SPECTROMETRY</scope>
</reference>
<reference key="26">
    <citation type="journal article" date="2007" name="Nat. Genet.">
        <title>A nonsynonymous SNP in PRKCH (protein kinase C eta) increases the risk of cerebral infarction.</title>
        <authorList>
            <person name="Kubo M."/>
            <person name="Hata J."/>
            <person name="Ninomiya T."/>
            <person name="Matsuda K."/>
            <person name="Yonemoto K."/>
            <person name="Nakano T."/>
            <person name="Matsushita T."/>
            <person name="Yamazaki K."/>
            <person name="Ohnishi Y."/>
            <person name="Saito S."/>
            <person name="Kitazono T."/>
            <person name="Ibayashi S."/>
            <person name="Sueishi K."/>
            <person name="Iida M."/>
            <person name="Nakamura Y."/>
            <person name="Kiyohara Y."/>
        </authorList>
    </citation>
    <scope>ASSOCIATION OF VARIANT ILE-374 WITH ISCHSTR</scope>
    <scope>CHARACTERIZATION OF VARIANT ILE-374</scope>
</reference>
<reference key="27">
    <citation type="journal article" date="2007" name="Nature">
        <title>Patterns of somatic mutation in human cancer genomes.</title>
        <authorList>
            <person name="Greenman C."/>
            <person name="Stephens P."/>
            <person name="Smith R."/>
            <person name="Dalgliesh G.L."/>
            <person name="Hunter C."/>
            <person name="Bignell G."/>
            <person name="Davies H."/>
            <person name="Teague J."/>
            <person name="Butler A."/>
            <person name="Stevens C."/>
            <person name="Edkins S."/>
            <person name="O'Meara S."/>
            <person name="Vastrik I."/>
            <person name="Schmidt E.E."/>
            <person name="Avis T."/>
            <person name="Barthorpe S."/>
            <person name="Bhamra G."/>
            <person name="Buck G."/>
            <person name="Choudhury B."/>
            <person name="Clements J."/>
            <person name="Cole J."/>
            <person name="Dicks E."/>
            <person name="Forbes S."/>
            <person name="Gray K."/>
            <person name="Halliday K."/>
            <person name="Harrison R."/>
            <person name="Hills K."/>
            <person name="Hinton J."/>
            <person name="Jenkinson A."/>
            <person name="Jones D."/>
            <person name="Menzies A."/>
            <person name="Mironenko T."/>
            <person name="Perry J."/>
            <person name="Raine K."/>
            <person name="Richardson D."/>
            <person name="Shepherd R."/>
            <person name="Small A."/>
            <person name="Tofts C."/>
            <person name="Varian J."/>
            <person name="Webb T."/>
            <person name="West S."/>
            <person name="Widaa S."/>
            <person name="Yates A."/>
            <person name="Cahill D.P."/>
            <person name="Louis D.N."/>
            <person name="Goldstraw P."/>
            <person name="Nicholson A.G."/>
            <person name="Brasseur F."/>
            <person name="Looijenga L."/>
            <person name="Weber B.L."/>
            <person name="Chiew Y.-E."/>
            <person name="DeFazio A."/>
            <person name="Greaves M.F."/>
            <person name="Green A.R."/>
            <person name="Campbell P."/>
            <person name="Birney E."/>
            <person name="Easton D.F."/>
            <person name="Chenevix-Trench G."/>
            <person name="Tan M.-H."/>
            <person name="Khoo S.K."/>
            <person name="Teh B.T."/>
            <person name="Yuen S.T."/>
            <person name="Leung S.Y."/>
            <person name="Wooster R."/>
            <person name="Futreal P.A."/>
            <person name="Stratton M.R."/>
        </authorList>
    </citation>
    <scope>VARIANTS [LARGE SCALE ANALYSIS] VAL-19; ARG-65; GLN-149; GLN-359; ILE-374; ALA-575; ILE-594 AND SER-612</scope>
</reference>
<organism>
    <name type="scientific">Homo sapiens</name>
    <name type="common">Human</name>
    <dbReference type="NCBI Taxonomy" id="9606"/>
    <lineage>
        <taxon>Eukaryota</taxon>
        <taxon>Metazoa</taxon>
        <taxon>Chordata</taxon>
        <taxon>Craniata</taxon>
        <taxon>Vertebrata</taxon>
        <taxon>Euteleostomi</taxon>
        <taxon>Mammalia</taxon>
        <taxon>Eutheria</taxon>
        <taxon>Euarchontoglires</taxon>
        <taxon>Primates</taxon>
        <taxon>Haplorrhini</taxon>
        <taxon>Catarrhini</taxon>
        <taxon>Hominidae</taxon>
        <taxon>Homo</taxon>
    </lineage>
</organism>
<accession>P24723</accession>
<accession>B4DJN5</accession>
<accession>Q16246</accession>
<accession>Q8NE03</accession>